<evidence type="ECO:0000250" key="1">
    <source>
        <dbReference type="UniProtKB" id="O95926"/>
    </source>
</evidence>
<evidence type="ECO:0000255" key="2"/>
<evidence type="ECO:0000305" key="3"/>
<reference key="1">
    <citation type="journal article" date="2000" name="Science">
        <title>The genome sequence of Drosophila melanogaster.</title>
        <authorList>
            <person name="Adams M.D."/>
            <person name="Celniker S.E."/>
            <person name="Holt R.A."/>
            <person name="Evans C.A."/>
            <person name="Gocayne J.D."/>
            <person name="Amanatides P.G."/>
            <person name="Scherer S.E."/>
            <person name="Li P.W."/>
            <person name="Hoskins R.A."/>
            <person name="Galle R.F."/>
            <person name="George R.A."/>
            <person name="Lewis S.E."/>
            <person name="Richards S."/>
            <person name="Ashburner M."/>
            <person name="Henderson S.N."/>
            <person name="Sutton G.G."/>
            <person name="Wortman J.R."/>
            <person name="Yandell M.D."/>
            <person name="Zhang Q."/>
            <person name="Chen L.X."/>
            <person name="Brandon R.C."/>
            <person name="Rogers Y.-H.C."/>
            <person name="Blazej R.G."/>
            <person name="Champe M."/>
            <person name="Pfeiffer B.D."/>
            <person name="Wan K.H."/>
            <person name="Doyle C."/>
            <person name="Baxter E.G."/>
            <person name="Helt G."/>
            <person name="Nelson C.R."/>
            <person name="Miklos G.L.G."/>
            <person name="Abril J.F."/>
            <person name="Agbayani A."/>
            <person name="An H.-J."/>
            <person name="Andrews-Pfannkoch C."/>
            <person name="Baldwin D."/>
            <person name="Ballew R.M."/>
            <person name="Basu A."/>
            <person name="Baxendale J."/>
            <person name="Bayraktaroglu L."/>
            <person name="Beasley E.M."/>
            <person name="Beeson K.Y."/>
            <person name="Benos P.V."/>
            <person name="Berman B.P."/>
            <person name="Bhandari D."/>
            <person name="Bolshakov S."/>
            <person name="Borkova D."/>
            <person name="Botchan M.R."/>
            <person name="Bouck J."/>
            <person name="Brokstein P."/>
            <person name="Brottier P."/>
            <person name="Burtis K.C."/>
            <person name="Busam D.A."/>
            <person name="Butler H."/>
            <person name="Cadieu E."/>
            <person name="Center A."/>
            <person name="Chandra I."/>
            <person name="Cherry J.M."/>
            <person name="Cawley S."/>
            <person name="Dahlke C."/>
            <person name="Davenport L.B."/>
            <person name="Davies P."/>
            <person name="de Pablos B."/>
            <person name="Delcher A."/>
            <person name="Deng Z."/>
            <person name="Mays A.D."/>
            <person name="Dew I."/>
            <person name="Dietz S.M."/>
            <person name="Dodson K."/>
            <person name="Doup L.E."/>
            <person name="Downes M."/>
            <person name="Dugan-Rocha S."/>
            <person name="Dunkov B.C."/>
            <person name="Dunn P."/>
            <person name="Durbin K.J."/>
            <person name="Evangelista C.C."/>
            <person name="Ferraz C."/>
            <person name="Ferriera S."/>
            <person name="Fleischmann W."/>
            <person name="Fosler C."/>
            <person name="Gabrielian A.E."/>
            <person name="Garg N.S."/>
            <person name="Gelbart W.M."/>
            <person name="Glasser K."/>
            <person name="Glodek A."/>
            <person name="Gong F."/>
            <person name="Gorrell J.H."/>
            <person name="Gu Z."/>
            <person name="Guan P."/>
            <person name="Harris M."/>
            <person name="Harris N.L."/>
            <person name="Harvey D.A."/>
            <person name="Heiman T.J."/>
            <person name="Hernandez J.R."/>
            <person name="Houck J."/>
            <person name="Hostin D."/>
            <person name="Houston K.A."/>
            <person name="Howland T.J."/>
            <person name="Wei M.-H."/>
            <person name="Ibegwam C."/>
            <person name="Jalali M."/>
            <person name="Kalush F."/>
            <person name="Karpen G.H."/>
            <person name="Ke Z."/>
            <person name="Kennison J.A."/>
            <person name="Ketchum K.A."/>
            <person name="Kimmel B.E."/>
            <person name="Kodira C.D."/>
            <person name="Kraft C.L."/>
            <person name="Kravitz S."/>
            <person name="Kulp D."/>
            <person name="Lai Z."/>
            <person name="Lasko P."/>
            <person name="Lei Y."/>
            <person name="Levitsky A.A."/>
            <person name="Li J.H."/>
            <person name="Li Z."/>
            <person name="Liang Y."/>
            <person name="Lin X."/>
            <person name="Liu X."/>
            <person name="Mattei B."/>
            <person name="McIntosh T.C."/>
            <person name="McLeod M.P."/>
            <person name="McPherson D."/>
            <person name="Merkulov G."/>
            <person name="Milshina N.V."/>
            <person name="Mobarry C."/>
            <person name="Morris J."/>
            <person name="Moshrefi A."/>
            <person name="Mount S.M."/>
            <person name="Moy M."/>
            <person name="Murphy B."/>
            <person name="Murphy L."/>
            <person name="Muzny D.M."/>
            <person name="Nelson D.L."/>
            <person name="Nelson D.R."/>
            <person name="Nelson K.A."/>
            <person name="Nixon K."/>
            <person name="Nusskern D.R."/>
            <person name="Pacleb J.M."/>
            <person name="Palazzolo M."/>
            <person name="Pittman G.S."/>
            <person name="Pan S."/>
            <person name="Pollard J."/>
            <person name="Puri V."/>
            <person name="Reese M.G."/>
            <person name="Reinert K."/>
            <person name="Remington K."/>
            <person name="Saunders R.D.C."/>
            <person name="Scheeler F."/>
            <person name="Shen H."/>
            <person name="Shue B.C."/>
            <person name="Siden-Kiamos I."/>
            <person name="Simpson M."/>
            <person name="Skupski M.P."/>
            <person name="Smith T.J."/>
            <person name="Spier E."/>
            <person name="Spradling A.C."/>
            <person name="Stapleton M."/>
            <person name="Strong R."/>
            <person name="Sun E."/>
            <person name="Svirskas R."/>
            <person name="Tector C."/>
            <person name="Turner R."/>
            <person name="Venter E."/>
            <person name="Wang A.H."/>
            <person name="Wang X."/>
            <person name="Wang Z.-Y."/>
            <person name="Wassarman D.A."/>
            <person name="Weinstock G.M."/>
            <person name="Weissenbach J."/>
            <person name="Williams S.M."/>
            <person name="Woodage T."/>
            <person name="Worley K.C."/>
            <person name="Wu D."/>
            <person name="Yang S."/>
            <person name="Yao Q.A."/>
            <person name="Ye J."/>
            <person name="Yeh R.-F."/>
            <person name="Zaveri J.S."/>
            <person name="Zhan M."/>
            <person name="Zhang G."/>
            <person name="Zhao Q."/>
            <person name="Zheng L."/>
            <person name="Zheng X.H."/>
            <person name="Zhong F.N."/>
            <person name="Zhong W."/>
            <person name="Zhou X."/>
            <person name="Zhu S.C."/>
            <person name="Zhu X."/>
            <person name="Smith H.O."/>
            <person name="Gibbs R.A."/>
            <person name="Myers E.W."/>
            <person name="Rubin G.M."/>
            <person name="Venter J.C."/>
        </authorList>
    </citation>
    <scope>NUCLEOTIDE SEQUENCE [LARGE SCALE GENOMIC DNA]</scope>
    <source>
        <strain>Berkeley</strain>
    </source>
</reference>
<reference key="2">
    <citation type="journal article" date="2002" name="Genome Biol.">
        <title>Annotation of the Drosophila melanogaster euchromatic genome: a systematic review.</title>
        <authorList>
            <person name="Misra S."/>
            <person name="Crosby M.A."/>
            <person name="Mungall C.J."/>
            <person name="Matthews B.B."/>
            <person name="Campbell K.S."/>
            <person name="Hradecky P."/>
            <person name="Huang Y."/>
            <person name="Kaminker J.S."/>
            <person name="Millburn G.H."/>
            <person name="Prochnik S.E."/>
            <person name="Smith C.D."/>
            <person name="Tupy J.L."/>
            <person name="Whitfield E.J."/>
            <person name="Bayraktaroglu L."/>
            <person name="Berman B.P."/>
            <person name="Bettencourt B.R."/>
            <person name="Celniker S.E."/>
            <person name="de Grey A.D.N.J."/>
            <person name="Drysdale R.A."/>
            <person name="Harris N.L."/>
            <person name="Richter J."/>
            <person name="Russo S."/>
            <person name="Schroeder A.J."/>
            <person name="Shu S.Q."/>
            <person name="Stapleton M."/>
            <person name="Yamada C."/>
            <person name="Ashburner M."/>
            <person name="Gelbart W.M."/>
            <person name="Rubin G.M."/>
            <person name="Lewis S.E."/>
        </authorList>
    </citation>
    <scope>GENOME REANNOTATION</scope>
    <source>
        <strain>Berkeley</strain>
    </source>
</reference>
<reference key="3">
    <citation type="submission" date="2005-05" db="EMBL/GenBank/DDBJ databases">
        <title>A Drosophila full-length cDNA resource.</title>
        <authorList>
            <person name="Stapleton M."/>
            <person name="Carlson J.W."/>
            <person name="Chavez C."/>
            <person name="Frise E."/>
            <person name="George R.A."/>
            <person name="Pacleb J.M."/>
            <person name="Park S."/>
            <person name="Wan K.H."/>
            <person name="Yu C."/>
            <person name="Celniker S.E."/>
        </authorList>
    </citation>
    <scope>NUCLEOTIDE SEQUENCE [LARGE SCALE MRNA]</scope>
    <source>
        <strain>Berkeley</strain>
    </source>
</reference>
<sequence length="226" mass="26537">MEKTKTAAEKLAERKARLLDLHKKRQEARTDNHQEVVAEDARKKLPKNWEARKRQAEWILADDKARAEAQAAGKDYERLKLLEVSAVDADRIEKKKKRKDNPDLGFSTYEAQTARQYNRLVKSMPARDLEKYERQKEELGDAFYGGAHTTLHSRTKDTPGAINKMVTDLEQQIERRKKYSRRRIYNDDADVDFINERNSKFNKKLDRFYSEHTAEIKQNLERGTAI</sequence>
<protein>
    <recommendedName>
        <fullName>Pre-mRNA-splicing factor Syf2</fullName>
    </recommendedName>
</protein>
<feature type="chain" id="PRO_0000250384" description="Pre-mRNA-splicing factor Syf2">
    <location>
        <begin position="1"/>
        <end position="226"/>
    </location>
</feature>
<feature type="coiled-coil region" evidence="2">
    <location>
        <begin position="1"/>
        <end position="29"/>
    </location>
</feature>
<name>SYF2_DROME</name>
<gene>
    <name type="primary">Syf2</name>
    <name type="ORF">CG12343</name>
</gene>
<keyword id="KW-0175">Coiled coil</keyword>
<keyword id="KW-0507">mRNA processing</keyword>
<keyword id="KW-0508">mRNA splicing</keyword>
<keyword id="KW-0539">Nucleus</keyword>
<keyword id="KW-1185">Reference proteome</keyword>
<keyword id="KW-0747">Spliceosome</keyword>
<proteinExistence type="evidence at transcript level"/>
<accession>Q9V5Q4</accession>
<dbReference type="EMBL" id="AE013599">
    <property type="protein sequence ID" value="AAF58745.1"/>
    <property type="molecule type" value="Genomic_DNA"/>
</dbReference>
<dbReference type="EMBL" id="BT022631">
    <property type="protein sequence ID" value="AAY55047.1"/>
    <property type="molecule type" value="mRNA"/>
</dbReference>
<dbReference type="RefSeq" id="NP_610617.1">
    <property type="nucleotide sequence ID" value="NM_136773.3"/>
</dbReference>
<dbReference type="SMR" id="Q9V5Q4"/>
<dbReference type="BioGRID" id="61950">
    <property type="interactions" value="1"/>
</dbReference>
<dbReference type="FunCoup" id="Q9V5Q4">
    <property type="interactions" value="1100"/>
</dbReference>
<dbReference type="IntAct" id="Q9V5Q4">
    <property type="interactions" value="16"/>
</dbReference>
<dbReference type="STRING" id="7227.FBpp0087342"/>
<dbReference type="PaxDb" id="7227-FBpp0087342"/>
<dbReference type="DNASU" id="36143"/>
<dbReference type="EnsemblMetazoa" id="FBtr0088247">
    <property type="protein sequence ID" value="FBpp0087342"/>
    <property type="gene ID" value="FBgn0033556"/>
</dbReference>
<dbReference type="GeneID" id="36143"/>
<dbReference type="KEGG" id="dme:Dmel_CG12343"/>
<dbReference type="UCSC" id="CG12343-RA">
    <property type="organism name" value="d. melanogaster"/>
</dbReference>
<dbReference type="AGR" id="FB:FBgn0033556"/>
<dbReference type="FlyBase" id="FBgn0033556">
    <property type="gene designation" value="CG12343"/>
</dbReference>
<dbReference type="VEuPathDB" id="VectorBase:FBgn0033556"/>
<dbReference type="eggNOG" id="KOG2609">
    <property type="taxonomic scope" value="Eukaryota"/>
</dbReference>
<dbReference type="GeneTree" id="ENSGT00390000017845"/>
<dbReference type="HOGENOM" id="CLU_051065_3_0_1"/>
<dbReference type="InParanoid" id="Q9V5Q4"/>
<dbReference type="OMA" id="RRRMHND"/>
<dbReference type="OrthoDB" id="199717at2759"/>
<dbReference type="PhylomeDB" id="Q9V5Q4"/>
<dbReference type="Reactome" id="R-DME-72163">
    <property type="pathway name" value="mRNA Splicing - Major Pathway"/>
</dbReference>
<dbReference type="BioGRID-ORCS" id="36143">
    <property type="hits" value="1 hit in 1 CRISPR screen"/>
</dbReference>
<dbReference type="GenomeRNAi" id="36143"/>
<dbReference type="PRO" id="PR:Q9V5Q4"/>
<dbReference type="Proteomes" id="UP000000803">
    <property type="component" value="Chromosome 2R"/>
</dbReference>
<dbReference type="Bgee" id="FBgn0033556">
    <property type="expression patterns" value="Expressed in medullary tangential neuron Mt1 (Drosophila) in brain and 136 other cell types or tissues"/>
</dbReference>
<dbReference type="GO" id="GO:0071013">
    <property type="term" value="C:catalytic step 2 spliceosome"/>
    <property type="evidence" value="ECO:0007005"/>
    <property type="project" value="FlyBase"/>
</dbReference>
<dbReference type="GO" id="GO:0071014">
    <property type="term" value="C:post-mRNA release spliceosomal complex"/>
    <property type="evidence" value="ECO:0000318"/>
    <property type="project" value="GO_Central"/>
</dbReference>
<dbReference type="GO" id="GO:0071011">
    <property type="term" value="C:precatalytic spliceosome"/>
    <property type="evidence" value="ECO:0007005"/>
    <property type="project" value="FlyBase"/>
</dbReference>
<dbReference type="GO" id="GO:0000974">
    <property type="term" value="C:Prp19 complex"/>
    <property type="evidence" value="ECO:0000318"/>
    <property type="project" value="GO_Central"/>
</dbReference>
<dbReference type="GO" id="GO:0071007">
    <property type="term" value="C:U2-type catalytic step 2 spliceosome"/>
    <property type="evidence" value="ECO:0000250"/>
    <property type="project" value="UniProtKB"/>
</dbReference>
<dbReference type="GO" id="GO:0003723">
    <property type="term" value="F:RNA binding"/>
    <property type="evidence" value="ECO:0000250"/>
    <property type="project" value="FlyBase"/>
</dbReference>
<dbReference type="GO" id="GO:0000398">
    <property type="term" value="P:mRNA splicing, via spliceosome"/>
    <property type="evidence" value="ECO:0000250"/>
    <property type="project" value="UniProtKB"/>
</dbReference>
<dbReference type="InterPro" id="IPR013260">
    <property type="entry name" value="mRNA_splic_SYF2"/>
</dbReference>
<dbReference type="PANTHER" id="PTHR13264">
    <property type="entry name" value="GCIP-INTERACTING PROTEIN P29"/>
    <property type="match status" value="1"/>
</dbReference>
<dbReference type="PANTHER" id="PTHR13264:SF5">
    <property type="entry name" value="PRE-MRNA-SPLICING FACTOR SYF2"/>
    <property type="match status" value="1"/>
</dbReference>
<dbReference type="Pfam" id="PF08231">
    <property type="entry name" value="SYF2"/>
    <property type="match status" value="1"/>
</dbReference>
<organism>
    <name type="scientific">Drosophila melanogaster</name>
    <name type="common">Fruit fly</name>
    <dbReference type="NCBI Taxonomy" id="7227"/>
    <lineage>
        <taxon>Eukaryota</taxon>
        <taxon>Metazoa</taxon>
        <taxon>Ecdysozoa</taxon>
        <taxon>Arthropoda</taxon>
        <taxon>Hexapoda</taxon>
        <taxon>Insecta</taxon>
        <taxon>Pterygota</taxon>
        <taxon>Neoptera</taxon>
        <taxon>Endopterygota</taxon>
        <taxon>Diptera</taxon>
        <taxon>Brachycera</taxon>
        <taxon>Muscomorpha</taxon>
        <taxon>Ephydroidea</taxon>
        <taxon>Drosophilidae</taxon>
        <taxon>Drosophila</taxon>
        <taxon>Sophophora</taxon>
    </lineage>
</organism>
<comment type="function">
    <text evidence="1">Involved in pre-mRNA splicing as component of the spliceosome.</text>
</comment>
<comment type="subunit">
    <text evidence="1">Identified in the spliceosome C complex.</text>
</comment>
<comment type="subcellular location">
    <subcellularLocation>
        <location evidence="1">Nucleus</location>
    </subcellularLocation>
</comment>
<comment type="similarity">
    <text evidence="3">Belongs to the SYF2 family.</text>
</comment>